<evidence type="ECO:0000255" key="1">
    <source>
        <dbReference type="HAMAP-Rule" id="MF_01716"/>
    </source>
</evidence>
<protein>
    <recommendedName>
        <fullName evidence="1">Ribose import ATP-binding protein RbsA 3</fullName>
        <ecNumber evidence="1">7.5.2.7</ecNumber>
    </recommendedName>
</protein>
<gene>
    <name evidence="1" type="primary">rbsA3</name>
    <name type="ordered locus">RB1148</name>
    <name type="ORF">SMb20855</name>
</gene>
<geneLocation type="plasmid">
    <name>pSymB</name>
    <name>megaplasmid 2</name>
</geneLocation>
<name>RBSA3_RHIME</name>
<sequence>MVTELANLKSISKSFGGIHALRSVNFDVRPGEVHALLGENGAGKSTLMRVLGGEIIPSQGEVVINGKRTELRDPRDARALGIVVIHQELALAPDLSVAENIFLGELPTLISRFSLRRRAKQLIDRLGFDIDPGRLVGTLSVAHQQVVEIAKALSQDIKIIVFDEPTAVLGAQDAMKLHQIIRGLRDRGVGIVYISHRLDEVFDIADRMTVMKDGETVGTVATTDVKIDDIIRMMVGRPIANMFPERSQRTIGAELLNVKKLNAGRMVRDVSFSVRAGEIVGLGGLIGSGRTEVARAIFGADPLDSGTISLKGKALKLKSPRDAVKAGIGLVPEDRKEHGVVIDKPIRVNATMARMSSVVNALGFLKPALERTDVTALGKSLRLKASSIDAPVSSLSGGNQQKVVLAKWFHAGGDVIILDEPTRGVDVGAKAEIYALINKLAEDGKAVLVISSEHQELFGLCDRVLAMGQGQIRGELTPSNYSEENLLGLSMMGGARASNQGSQV</sequence>
<reference key="1">
    <citation type="journal article" date="2001" name="Proc. Natl. Acad. Sci. U.S.A.">
        <title>The complete sequence of the 1,683-kb pSymB megaplasmid from the N2-fixing endosymbiont Sinorhizobium meliloti.</title>
        <authorList>
            <person name="Finan T.M."/>
            <person name="Weidner S."/>
            <person name="Wong K."/>
            <person name="Buhrmester J."/>
            <person name="Chain P."/>
            <person name="Vorhoelter F.J."/>
            <person name="Hernandez-Lucas I."/>
            <person name="Becker A."/>
            <person name="Cowie A."/>
            <person name="Gouzy J."/>
            <person name="Golding B."/>
            <person name="Puehler A."/>
        </authorList>
    </citation>
    <scope>NUCLEOTIDE SEQUENCE [LARGE SCALE GENOMIC DNA]</scope>
    <source>
        <strain>1021</strain>
    </source>
</reference>
<reference key="2">
    <citation type="journal article" date="2001" name="Science">
        <title>The composite genome of the legume symbiont Sinorhizobium meliloti.</title>
        <authorList>
            <person name="Galibert F."/>
            <person name="Finan T.M."/>
            <person name="Long S.R."/>
            <person name="Puehler A."/>
            <person name="Abola P."/>
            <person name="Ampe F."/>
            <person name="Barloy-Hubler F."/>
            <person name="Barnett M.J."/>
            <person name="Becker A."/>
            <person name="Boistard P."/>
            <person name="Bothe G."/>
            <person name="Boutry M."/>
            <person name="Bowser L."/>
            <person name="Buhrmester J."/>
            <person name="Cadieu E."/>
            <person name="Capela D."/>
            <person name="Chain P."/>
            <person name="Cowie A."/>
            <person name="Davis R.W."/>
            <person name="Dreano S."/>
            <person name="Federspiel N.A."/>
            <person name="Fisher R.F."/>
            <person name="Gloux S."/>
            <person name="Godrie T."/>
            <person name="Goffeau A."/>
            <person name="Golding B."/>
            <person name="Gouzy J."/>
            <person name="Gurjal M."/>
            <person name="Hernandez-Lucas I."/>
            <person name="Hong A."/>
            <person name="Huizar L."/>
            <person name="Hyman R.W."/>
            <person name="Jones T."/>
            <person name="Kahn D."/>
            <person name="Kahn M.L."/>
            <person name="Kalman S."/>
            <person name="Keating D.H."/>
            <person name="Kiss E."/>
            <person name="Komp C."/>
            <person name="Lelaure V."/>
            <person name="Masuy D."/>
            <person name="Palm C."/>
            <person name="Peck M.C."/>
            <person name="Pohl T.M."/>
            <person name="Portetelle D."/>
            <person name="Purnelle B."/>
            <person name="Ramsperger U."/>
            <person name="Surzycki R."/>
            <person name="Thebault P."/>
            <person name="Vandenbol M."/>
            <person name="Vorhoelter F.J."/>
            <person name="Weidner S."/>
            <person name="Wells D.H."/>
            <person name="Wong K."/>
            <person name="Yeh K.-C."/>
            <person name="Batut J."/>
        </authorList>
    </citation>
    <scope>NUCLEOTIDE SEQUENCE [LARGE SCALE GENOMIC DNA]</scope>
    <source>
        <strain>1021</strain>
    </source>
</reference>
<feature type="chain" id="PRO_0000261090" description="Ribose import ATP-binding protein RbsA 3">
    <location>
        <begin position="1"/>
        <end position="504"/>
    </location>
</feature>
<feature type="domain" description="ABC transporter 1" evidence="1">
    <location>
        <begin position="6"/>
        <end position="238"/>
    </location>
</feature>
<feature type="domain" description="ABC transporter 2" evidence="1">
    <location>
        <begin position="251"/>
        <end position="494"/>
    </location>
</feature>
<feature type="binding site" evidence="1">
    <location>
        <begin position="38"/>
        <end position="45"/>
    </location>
    <ligand>
        <name>ATP</name>
        <dbReference type="ChEBI" id="CHEBI:30616"/>
    </ligand>
</feature>
<keyword id="KW-0067">ATP-binding</keyword>
<keyword id="KW-0997">Cell inner membrane</keyword>
<keyword id="KW-1003">Cell membrane</keyword>
<keyword id="KW-0472">Membrane</keyword>
<keyword id="KW-0547">Nucleotide-binding</keyword>
<keyword id="KW-0614">Plasmid</keyword>
<keyword id="KW-1185">Reference proteome</keyword>
<keyword id="KW-0677">Repeat</keyword>
<keyword id="KW-0762">Sugar transport</keyword>
<keyword id="KW-1278">Translocase</keyword>
<keyword id="KW-0813">Transport</keyword>
<dbReference type="EC" id="7.5.2.7" evidence="1"/>
<dbReference type="EMBL" id="AL591985">
    <property type="protein sequence ID" value="CAC49548.1"/>
    <property type="molecule type" value="Genomic_DNA"/>
</dbReference>
<dbReference type="PIR" id="D95985">
    <property type="entry name" value="D95985"/>
</dbReference>
<dbReference type="RefSeq" id="NP_437688.1">
    <property type="nucleotide sequence ID" value="NC_003078.1"/>
</dbReference>
<dbReference type="RefSeq" id="WP_010975980.1">
    <property type="nucleotide sequence ID" value="NC_003078.1"/>
</dbReference>
<dbReference type="SMR" id="Q92UI2"/>
<dbReference type="EnsemblBacteria" id="CAC49548">
    <property type="protein sequence ID" value="CAC49548"/>
    <property type="gene ID" value="SM_b20855"/>
</dbReference>
<dbReference type="KEGG" id="sme:SM_b20855"/>
<dbReference type="PATRIC" id="fig|266834.11.peg.6076"/>
<dbReference type="eggNOG" id="COG1129">
    <property type="taxonomic scope" value="Bacteria"/>
</dbReference>
<dbReference type="HOGENOM" id="CLU_000604_92_3_5"/>
<dbReference type="OrthoDB" id="9805029at2"/>
<dbReference type="Proteomes" id="UP000001976">
    <property type="component" value="Plasmid pSymB"/>
</dbReference>
<dbReference type="GO" id="GO:0005886">
    <property type="term" value="C:plasma membrane"/>
    <property type="evidence" value="ECO:0007669"/>
    <property type="project" value="UniProtKB-SubCell"/>
</dbReference>
<dbReference type="GO" id="GO:0015611">
    <property type="term" value="F:ABC-type D-ribose transporter activity"/>
    <property type="evidence" value="ECO:0007669"/>
    <property type="project" value="UniProtKB-EC"/>
</dbReference>
<dbReference type="GO" id="GO:0005524">
    <property type="term" value="F:ATP binding"/>
    <property type="evidence" value="ECO:0007669"/>
    <property type="project" value="UniProtKB-KW"/>
</dbReference>
<dbReference type="GO" id="GO:0016887">
    <property type="term" value="F:ATP hydrolysis activity"/>
    <property type="evidence" value="ECO:0007669"/>
    <property type="project" value="InterPro"/>
</dbReference>
<dbReference type="CDD" id="cd03216">
    <property type="entry name" value="ABC_Carb_Monos_I"/>
    <property type="match status" value="1"/>
</dbReference>
<dbReference type="CDD" id="cd03215">
    <property type="entry name" value="ABC_Carb_Monos_II"/>
    <property type="match status" value="1"/>
</dbReference>
<dbReference type="FunFam" id="3.40.50.300:FF:000127">
    <property type="entry name" value="Ribose import ATP-binding protein RbsA"/>
    <property type="match status" value="1"/>
</dbReference>
<dbReference type="Gene3D" id="3.40.50.300">
    <property type="entry name" value="P-loop containing nucleotide triphosphate hydrolases"/>
    <property type="match status" value="2"/>
</dbReference>
<dbReference type="InterPro" id="IPR003593">
    <property type="entry name" value="AAA+_ATPase"/>
</dbReference>
<dbReference type="InterPro" id="IPR050107">
    <property type="entry name" value="ABC_carbohydrate_import_ATPase"/>
</dbReference>
<dbReference type="InterPro" id="IPR003439">
    <property type="entry name" value="ABC_transporter-like_ATP-bd"/>
</dbReference>
<dbReference type="InterPro" id="IPR017871">
    <property type="entry name" value="ABC_transporter-like_CS"/>
</dbReference>
<dbReference type="InterPro" id="IPR027417">
    <property type="entry name" value="P-loop_NTPase"/>
</dbReference>
<dbReference type="PANTHER" id="PTHR43790">
    <property type="entry name" value="CARBOHYDRATE TRANSPORT ATP-BINDING PROTEIN MG119-RELATED"/>
    <property type="match status" value="1"/>
</dbReference>
<dbReference type="PANTHER" id="PTHR43790:SF3">
    <property type="entry name" value="D-ALLOSE IMPORT ATP-BINDING PROTEIN ALSA-RELATED"/>
    <property type="match status" value="1"/>
</dbReference>
<dbReference type="Pfam" id="PF00005">
    <property type="entry name" value="ABC_tran"/>
    <property type="match status" value="2"/>
</dbReference>
<dbReference type="SMART" id="SM00382">
    <property type="entry name" value="AAA"/>
    <property type="match status" value="2"/>
</dbReference>
<dbReference type="SUPFAM" id="SSF52540">
    <property type="entry name" value="P-loop containing nucleoside triphosphate hydrolases"/>
    <property type="match status" value="2"/>
</dbReference>
<dbReference type="PROSITE" id="PS00211">
    <property type="entry name" value="ABC_TRANSPORTER_1"/>
    <property type="match status" value="1"/>
</dbReference>
<dbReference type="PROSITE" id="PS50893">
    <property type="entry name" value="ABC_TRANSPORTER_2"/>
    <property type="match status" value="2"/>
</dbReference>
<dbReference type="PROSITE" id="PS51254">
    <property type="entry name" value="RBSA"/>
    <property type="match status" value="1"/>
</dbReference>
<comment type="function">
    <text evidence="1">Part of the ABC transporter complex RbsABC involved in ribose import. Responsible for energy coupling to the transport system.</text>
</comment>
<comment type="catalytic activity">
    <reaction evidence="1">
        <text>D-ribose(out) + ATP + H2O = D-ribose(in) + ADP + phosphate + H(+)</text>
        <dbReference type="Rhea" id="RHEA:29903"/>
        <dbReference type="ChEBI" id="CHEBI:15377"/>
        <dbReference type="ChEBI" id="CHEBI:15378"/>
        <dbReference type="ChEBI" id="CHEBI:30616"/>
        <dbReference type="ChEBI" id="CHEBI:43474"/>
        <dbReference type="ChEBI" id="CHEBI:47013"/>
        <dbReference type="ChEBI" id="CHEBI:456216"/>
        <dbReference type="EC" id="7.5.2.7"/>
    </reaction>
</comment>
<comment type="subunit">
    <text evidence="1">The complex is composed of an ATP-binding protein (RbsA), two transmembrane proteins (RbsC) and a solute-binding protein (RbsB).</text>
</comment>
<comment type="subcellular location">
    <subcellularLocation>
        <location evidence="1">Cell inner membrane</location>
        <topology evidence="1">Peripheral membrane protein</topology>
    </subcellularLocation>
</comment>
<comment type="similarity">
    <text evidence="1">Belongs to the ABC transporter superfamily. Ribose importer (TC 3.A.1.2.1) family.</text>
</comment>
<organism>
    <name type="scientific">Rhizobium meliloti (strain 1021)</name>
    <name type="common">Ensifer meliloti</name>
    <name type="synonym">Sinorhizobium meliloti</name>
    <dbReference type="NCBI Taxonomy" id="266834"/>
    <lineage>
        <taxon>Bacteria</taxon>
        <taxon>Pseudomonadati</taxon>
        <taxon>Pseudomonadota</taxon>
        <taxon>Alphaproteobacteria</taxon>
        <taxon>Hyphomicrobiales</taxon>
        <taxon>Rhizobiaceae</taxon>
        <taxon>Sinorhizobium/Ensifer group</taxon>
        <taxon>Sinorhizobium</taxon>
    </lineage>
</organism>
<proteinExistence type="inferred from homology"/>
<accession>Q92UI2</accession>